<accession>B8DSW4</accession>
<reference key="1">
    <citation type="journal article" date="2009" name="J. Bacteriol.">
        <title>Genome sequence of the probiotic bacterium Bifidobacterium animalis subsp. lactis AD011.</title>
        <authorList>
            <person name="Kim J.F."/>
            <person name="Jeong H."/>
            <person name="Yu D.S."/>
            <person name="Choi S.-H."/>
            <person name="Hur C.-G."/>
            <person name="Park M.-S."/>
            <person name="Yoon S.H."/>
            <person name="Kim D.-W."/>
            <person name="Ji G.E."/>
            <person name="Park H.-S."/>
            <person name="Oh T.K."/>
        </authorList>
    </citation>
    <scope>NUCLEOTIDE SEQUENCE [LARGE SCALE GENOMIC DNA]</scope>
    <source>
        <strain>AD011</strain>
    </source>
</reference>
<keyword id="KW-0028">Amino-acid biosynthesis</keyword>
<keyword id="KW-0963">Cytoplasm</keyword>
<keyword id="KW-0368">Histidine biosynthesis</keyword>
<keyword id="KW-0456">Lyase</keyword>
<keyword id="KW-1185">Reference proteome</keyword>
<proteinExistence type="inferred from homology"/>
<comment type="catalytic activity">
    <reaction evidence="1">
        <text>D-erythro-1-(imidazol-4-yl)glycerol 3-phosphate = 3-(imidazol-4-yl)-2-oxopropyl phosphate + H2O</text>
        <dbReference type="Rhea" id="RHEA:11040"/>
        <dbReference type="ChEBI" id="CHEBI:15377"/>
        <dbReference type="ChEBI" id="CHEBI:57766"/>
        <dbReference type="ChEBI" id="CHEBI:58278"/>
        <dbReference type="EC" id="4.2.1.19"/>
    </reaction>
</comment>
<comment type="pathway">
    <text evidence="1">Amino-acid biosynthesis; L-histidine biosynthesis; L-histidine from 5-phospho-alpha-D-ribose 1-diphosphate: step 6/9.</text>
</comment>
<comment type="subcellular location">
    <subcellularLocation>
        <location evidence="1">Cytoplasm</location>
    </subcellularLocation>
</comment>
<comment type="similarity">
    <text evidence="1">Belongs to the imidazoleglycerol-phosphate dehydratase family.</text>
</comment>
<organism>
    <name type="scientific">Bifidobacterium animalis subsp. lactis (strain AD011)</name>
    <dbReference type="NCBI Taxonomy" id="442563"/>
    <lineage>
        <taxon>Bacteria</taxon>
        <taxon>Bacillati</taxon>
        <taxon>Actinomycetota</taxon>
        <taxon>Actinomycetes</taxon>
        <taxon>Bifidobacteriales</taxon>
        <taxon>Bifidobacteriaceae</taxon>
        <taxon>Bifidobacterium</taxon>
    </lineage>
</organism>
<evidence type="ECO:0000255" key="1">
    <source>
        <dbReference type="HAMAP-Rule" id="MF_00076"/>
    </source>
</evidence>
<name>HIS7_BIFA0</name>
<protein>
    <recommendedName>
        <fullName evidence="1">Imidazoleglycerol-phosphate dehydratase</fullName>
        <shortName evidence="1">IGPD</shortName>
        <ecNumber evidence="1">4.2.1.19</ecNumber>
    </recommendedName>
</protein>
<feature type="chain" id="PRO_1000118216" description="Imidazoleglycerol-phosphate dehydratase">
    <location>
        <begin position="1"/>
        <end position="200"/>
    </location>
</feature>
<sequence length="200" mass="21718">MARTAHIVRQTSESSIDLELNLDGTGKTNIETTVPFYNHMMTALGKHSLIDLNIVASGDTDIDAHHTVEDTAIVFGEALRQALGDKRGIRRFADATVPLDEALAKAVVDVSGRPYCVCSGEPEGFQYAMIGGHFTGSLVRHVMESIAFHAQICLHMHLIAGRDPHHIAEAEFKALARALRFAIEPDPRIQGLIPSTKGAL</sequence>
<dbReference type="EC" id="4.2.1.19" evidence="1"/>
<dbReference type="EMBL" id="CP001213">
    <property type="protein sequence ID" value="ACL29093.1"/>
    <property type="molecule type" value="Genomic_DNA"/>
</dbReference>
<dbReference type="RefSeq" id="WP_004218611.1">
    <property type="nucleotide sequence ID" value="NC_011835.1"/>
</dbReference>
<dbReference type="SMR" id="B8DSW4"/>
<dbReference type="STRING" id="442563.BLA_0801"/>
<dbReference type="GeneID" id="29695828"/>
<dbReference type="KEGG" id="bla:BLA_0801"/>
<dbReference type="HOGENOM" id="CLU_044308_2_0_11"/>
<dbReference type="UniPathway" id="UPA00031">
    <property type="reaction ID" value="UER00011"/>
</dbReference>
<dbReference type="Proteomes" id="UP000002456">
    <property type="component" value="Chromosome"/>
</dbReference>
<dbReference type="GO" id="GO:0005737">
    <property type="term" value="C:cytoplasm"/>
    <property type="evidence" value="ECO:0007669"/>
    <property type="project" value="UniProtKB-SubCell"/>
</dbReference>
<dbReference type="GO" id="GO:0004424">
    <property type="term" value="F:imidazoleglycerol-phosphate dehydratase activity"/>
    <property type="evidence" value="ECO:0007669"/>
    <property type="project" value="UniProtKB-UniRule"/>
</dbReference>
<dbReference type="GO" id="GO:0000105">
    <property type="term" value="P:L-histidine biosynthetic process"/>
    <property type="evidence" value="ECO:0007669"/>
    <property type="project" value="UniProtKB-UniRule"/>
</dbReference>
<dbReference type="CDD" id="cd07914">
    <property type="entry name" value="IGPD"/>
    <property type="match status" value="1"/>
</dbReference>
<dbReference type="FunFam" id="3.30.230.40:FF:000001">
    <property type="entry name" value="Imidazoleglycerol-phosphate dehydratase HisB"/>
    <property type="match status" value="1"/>
</dbReference>
<dbReference type="FunFam" id="3.30.230.40:FF:000003">
    <property type="entry name" value="Imidazoleglycerol-phosphate dehydratase HisB"/>
    <property type="match status" value="1"/>
</dbReference>
<dbReference type="Gene3D" id="3.30.230.40">
    <property type="entry name" value="Imidazole glycerol phosphate dehydratase, domain 1"/>
    <property type="match status" value="2"/>
</dbReference>
<dbReference type="HAMAP" id="MF_00076">
    <property type="entry name" value="HisB"/>
    <property type="match status" value="1"/>
</dbReference>
<dbReference type="InterPro" id="IPR038494">
    <property type="entry name" value="IGPD_sf"/>
</dbReference>
<dbReference type="InterPro" id="IPR000807">
    <property type="entry name" value="ImidazoleglycerolP_deHydtase"/>
</dbReference>
<dbReference type="InterPro" id="IPR020565">
    <property type="entry name" value="ImidazoleglycerP_deHydtase_CS"/>
</dbReference>
<dbReference type="InterPro" id="IPR020568">
    <property type="entry name" value="Ribosomal_Su5_D2-typ_SF"/>
</dbReference>
<dbReference type="NCBIfam" id="NF002110">
    <property type="entry name" value="PRK00951.1-6"/>
    <property type="match status" value="1"/>
</dbReference>
<dbReference type="NCBIfam" id="NF002111">
    <property type="entry name" value="PRK00951.2-1"/>
    <property type="match status" value="1"/>
</dbReference>
<dbReference type="NCBIfam" id="NF002114">
    <property type="entry name" value="PRK00951.2-4"/>
    <property type="match status" value="1"/>
</dbReference>
<dbReference type="PANTHER" id="PTHR23133:SF2">
    <property type="entry name" value="IMIDAZOLEGLYCEROL-PHOSPHATE DEHYDRATASE"/>
    <property type="match status" value="1"/>
</dbReference>
<dbReference type="PANTHER" id="PTHR23133">
    <property type="entry name" value="IMIDAZOLEGLYCEROL-PHOSPHATE DEHYDRATASE HIS7"/>
    <property type="match status" value="1"/>
</dbReference>
<dbReference type="Pfam" id="PF00475">
    <property type="entry name" value="IGPD"/>
    <property type="match status" value="1"/>
</dbReference>
<dbReference type="SUPFAM" id="SSF54211">
    <property type="entry name" value="Ribosomal protein S5 domain 2-like"/>
    <property type="match status" value="2"/>
</dbReference>
<dbReference type="PROSITE" id="PS00954">
    <property type="entry name" value="IGP_DEHYDRATASE_1"/>
    <property type="match status" value="1"/>
</dbReference>
<dbReference type="PROSITE" id="PS00955">
    <property type="entry name" value="IGP_DEHYDRATASE_2"/>
    <property type="match status" value="1"/>
</dbReference>
<gene>
    <name evidence="1" type="primary">hisB</name>
    <name type="ordered locus">BLA_0801</name>
</gene>